<feature type="chain" id="PRO_0000099313" description="DNA packaging protein OPG160">
    <location>
        <begin position="1"/>
        <end position="270"/>
    </location>
</feature>
<feature type="binding site" evidence="2">
    <location>
        <begin position="55"/>
        <end position="62"/>
    </location>
    <ligand>
        <name>ATP</name>
        <dbReference type="ChEBI" id="CHEBI:30616"/>
    </ligand>
</feature>
<comment type="function">
    <text evidence="1">Participates in viral DNA packaging and virion morphogenesis.</text>
</comment>
<comment type="subunit">
    <text evidence="1">Interacts with protein OPG137.</text>
</comment>
<comment type="similarity">
    <text evidence="3">Belongs to the orthopoxvirus OPG160 protein family.</text>
</comment>
<comment type="sequence caution" evidence="3">
    <conflict type="erroneous gene model prediction">
        <sequence resource="EMBL-CDS" id="AAA48158"/>
    </conflict>
</comment>
<name>PG160_VACCC</name>
<sequence>MNCFQEKQFSRENLLKMPFRMVLTGGSGSGKTIYLLSLFSTLVKKYKHIFLFTPVYNPDYDGYIWPNHINFVSSQESLEYNLIRTKSNIEKCIAVAQNHKKSAHFLLIFDDVGDKLSKCNTLIEFLNFGRHLNTSIILLCQTYRHVPILGRANITHFCSFNISISDAENMLRSMPVKGKRKDILNMLNMIQTARSNNRLAIIIEDSVFCEGELRICTDTADKDVIEQKLNIDILVNQYSHMKKNLNAILESKKTKLCNSDQSSSSKNVSS</sequence>
<reference key="1">
    <citation type="journal article" date="1990" name="Virology">
        <title>The complete DNA sequence of vaccinia virus.</title>
        <authorList>
            <person name="Goebel S.J."/>
            <person name="Johnson G.P."/>
            <person name="Perkus M.E."/>
            <person name="Davis S.W."/>
            <person name="Winslow J.P."/>
            <person name="Paoletti E."/>
        </authorList>
    </citation>
    <scope>NUCLEOTIDE SEQUENCE [LARGE SCALE GENOMIC DNA]</scope>
</reference>
<reference key="2">
    <citation type="journal article" date="1990" name="Virology">
        <title>Appendix to 'The complete DNA sequence of vaccinia virus'.</title>
        <authorList>
            <person name="Goebel S.J."/>
            <person name="Johnson G.P."/>
            <person name="Perkus M.E."/>
            <person name="Davis S.W."/>
            <person name="Winslow J.P."/>
            <person name="Paoletti E."/>
        </authorList>
    </citation>
    <scope>NUCLEOTIDE SEQUENCE [LARGE SCALE GENOMIC DNA]</scope>
</reference>
<protein>
    <recommendedName>
        <fullName>DNA packaging protein OPG160</fullName>
    </recommendedName>
</protein>
<organismHost>
    <name type="scientific">Homo sapiens</name>
    <name type="common">Human</name>
    <dbReference type="NCBI Taxonomy" id="9606"/>
</organismHost>
<accession>P68614</accession>
<accession>P21055</accession>
<accession>Q89195</accession>
<keyword id="KW-0067">ATP-binding</keyword>
<keyword id="KW-0547">Nucleotide-binding</keyword>
<keyword id="KW-1185">Reference proteome</keyword>
<proteinExistence type="inferred from homology"/>
<organism>
    <name type="scientific">Vaccinia virus (strain Copenhagen)</name>
    <name type="common">VACV</name>
    <dbReference type="NCBI Taxonomy" id="10249"/>
    <lineage>
        <taxon>Viruses</taxon>
        <taxon>Varidnaviria</taxon>
        <taxon>Bamfordvirae</taxon>
        <taxon>Nucleocytoviricota</taxon>
        <taxon>Pokkesviricetes</taxon>
        <taxon>Chitovirales</taxon>
        <taxon>Poxviridae</taxon>
        <taxon>Chordopoxvirinae</taxon>
        <taxon>Orthopoxvirus</taxon>
        <taxon>Vaccinia virus</taxon>
    </lineage>
</organism>
<dbReference type="EMBL" id="M35027">
    <property type="protein sequence ID" value="AAA48158.1"/>
    <property type="status" value="ALT_INIT"/>
    <property type="molecule type" value="Genomic_DNA"/>
</dbReference>
<dbReference type="PIR" id="G42520">
    <property type="entry name" value="G42520"/>
</dbReference>
<dbReference type="Proteomes" id="UP000008269">
    <property type="component" value="Segment"/>
</dbReference>
<dbReference type="GO" id="GO:0005524">
    <property type="term" value="F:ATP binding"/>
    <property type="evidence" value="ECO:0007669"/>
    <property type="project" value="UniProtKB-KW"/>
</dbReference>
<dbReference type="Gene3D" id="3.40.50.300">
    <property type="entry name" value="P-loop containing nucleotide triphosphate hydrolases"/>
    <property type="match status" value="1"/>
</dbReference>
<dbReference type="InterPro" id="IPR006758">
    <property type="entry name" value="A32L"/>
</dbReference>
<dbReference type="InterPro" id="IPR027417">
    <property type="entry name" value="P-loop_NTPase"/>
</dbReference>
<dbReference type="Pfam" id="PF04665">
    <property type="entry name" value="Pox_A32"/>
    <property type="match status" value="1"/>
</dbReference>
<dbReference type="SUPFAM" id="SSF52540">
    <property type="entry name" value="P-loop containing nucleoside triphosphate hydrolases"/>
    <property type="match status" value="1"/>
</dbReference>
<evidence type="ECO:0000250" key="1">
    <source>
        <dbReference type="UniProtKB" id="P68615"/>
    </source>
</evidence>
<evidence type="ECO:0000255" key="2"/>
<evidence type="ECO:0000305" key="3"/>
<gene>
    <name type="primary">OPG160</name>
    <name type="ORF">A32L</name>
</gene>